<proteinExistence type="evidence at protein level"/>
<name>GABPA_HUMAN</name>
<dbReference type="EMBL" id="D13318">
    <property type="protein sequence ID" value="BAA02575.1"/>
    <property type="molecule type" value="mRNA"/>
</dbReference>
<dbReference type="EMBL" id="U13044">
    <property type="protein sequence ID" value="AAA65706.1"/>
    <property type="molecule type" value="mRNA"/>
</dbReference>
<dbReference type="CCDS" id="CCDS13575.1"/>
<dbReference type="PIR" id="A48146">
    <property type="entry name" value="A48146"/>
</dbReference>
<dbReference type="PIR" id="I38739">
    <property type="entry name" value="I38739"/>
</dbReference>
<dbReference type="RefSeq" id="NP_001184226.1">
    <property type="nucleotide sequence ID" value="NM_001197297.2"/>
</dbReference>
<dbReference type="RefSeq" id="NP_002031.2">
    <property type="nucleotide sequence ID" value="NM_002040.3"/>
</dbReference>
<dbReference type="RefSeq" id="XP_005260995.1">
    <property type="nucleotide sequence ID" value="XM_005260938.6"/>
</dbReference>
<dbReference type="RefSeq" id="XP_011527822.1">
    <property type="nucleotide sequence ID" value="XM_011529520.2"/>
</dbReference>
<dbReference type="RefSeq" id="XP_011527823.1">
    <property type="nucleotide sequence ID" value="XM_011529521.2"/>
</dbReference>
<dbReference type="RefSeq" id="XP_016883802.1">
    <property type="nucleotide sequence ID" value="XM_017028313.3"/>
</dbReference>
<dbReference type="RefSeq" id="XP_024307830.1">
    <property type="nucleotide sequence ID" value="XM_024452062.2"/>
</dbReference>
<dbReference type="RefSeq" id="XP_047296693.1">
    <property type="nucleotide sequence ID" value="XM_047440737.1"/>
</dbReference>
<dbReference type="RefSeq" id="XP_047296694.1">
    <property type="nucleotide sequence ID" value="XM_047440738.1"/>
</dbReference>
<dbReference type="RefSeq" id="XP_047296695.1">
    <property type="nucleotide sequence ID" value="XM_047440739.1"/>
</dbReference>
<dbReference type="RefSeq" id="XP_054180389.1">
    <property type="nucleotide sequence ID" value="XM_054324414.1"/>
</dbReference>
<dbReference type="RefSeq" id="XP_054180390.1">
    <property type="nucleotide sequence ID" value="XM_054324415.1"/>
</dbReference>
<dbReference type="RefSeq" id="XP_054180391.1">
    <property type="nucleotide sequence ID" value="XM_054324416.1"/>
</dbReference>
<dbReference type="RefSeq" id="XP_054180392.1">
    <property type="nucleotide sequence ID" value="XM_054324417.1"/>
</dbReference>
<dbReference type="RefSeq" id="XP_054180393.1">
    <property type="nucleotide sequence ID" value="XM_054324418.1"/>
</dbReference>
<dbReference type="RefSeq" id="XP_054180394.1">
    <property type="nucleotide sequence ID" value="XM_054324419.1"/>
</dbReference>
<dbReference type="RefSeq" id="XP_054180395.1">
    <property type="nucleotide sequence ID" value="XM_054324420.1"/>
</dbReference>
<dbReference type="RefSeq" id="XP_054180396.1">
    <property type="nucleotide sequence ID" value="XM_054324421.1"/>
</dbReference>
<dbReference type="RefSeq" id="XP_054180397.1">
    <property type="nucleotide sequence ID" value="XM_054324422.1"/>
</dbReference>
<dbReference type="BMRB" id="Q06546"/>
<dbReference type="SMR" id="Q06546"/>
<dbReference type="BioGRID" id="108826">
    <property type="interactions" value="132"/>
</dbReference>
<dbReference type="DIP" id="DIP-33980N"/>
<dbReference type="FunCoup" id="Q06546">
    <property type="interactions" value="5844"/>
</dbReference>
<dbReference type="IntAct" id="Q06546">
    <property type="interactions" value="87"/>
</dbReference>
<dbReference type="MINT" id="Q06546"/>
<dbReference type="STRING" id="9606.ENSP00000346886"/>
<dbReference type="GlyCosmos" id="Q06546">
    <property type="glycosylation" value="4 sites, 2 glycans"/>
</dbReference>
<dbReference type="GlyGen" id="Q06546">
    <property type="glycosylation" value="7 sites, 2 O-linked glycans (7 sites)"/>
</dbReference>
<dbReference type="iPTMnet" id="Q06546"/>
<dbReference type="PhosphoSitePlus" id="Q06546"/>
<dbReference type="BioMuta" id="GABPA"/>
<dbReference type="DMDM" id="729553"/>
<dbReference type="jPOST" id="Q06546"/>
<dbReference type="MassIVE" id="Q06546"/>
<dbReference type="PaxDb" id="9606-ENSP00000346886"/>
<dbReference type="PeptideAtlas" id="Q06546"/>
<dbReference type="ProteomicsDB" id="58457"/>
<dbReference type="Pumba" id="Q06546"/>
<dbReference type="Antibodypedia" id="919">
    <property type="antibodies" value="411 antibodies from 32 providers"/>
</dbReference>
<dbReference type="DNASU" id="2551"/>
<dbReference type="Ensembl" id="ENST00000354828.7">
    <property type="protein sequence ID" value="ENSP00000346886.3"/>
    <property type="gene ID" value="ENSG00000154727.11"/>
</dbReference>
<dbReference type="Ensembl" id="ENST00000400075.4">
    <property type="protein sequence ID" value="ENSP00000382948.3"/>
    <property type="gene ID" value="ENSG00000154727.11"/>
</dbReference>
<dbReference type="GeneID" id="2551"/>
<dbReference type="KEGG" id="hsa:2551"/>
<dbReference type="MANE-Select" id="ENST00000400075.4">
    <property type="protein sequence ID" value="ENSP00000382948.3"/>
    <property type="RefSeq nucleotide sequence ID" value="NM_002040.4"/>
    <property type="RefSeq protein sequence ID" value="NP_002031.2"/>
</dbReference>
<dbReference type="UCSC" id="uc002ylx.5">
    <property type="organism name" value="human"/>
</dbReference>
<dbReference type="AGR" id="HGNC:4071"/>
<dbReference type="CTD" id="2551"/>
<dbReference type="DisGeNET" id="2551"/>
<dbReference type="GeneCards" id="GABPA"/>
<dbReference type="HGNC" id="HGNC:4071">
    <property type="gene designation" value="GABPA"/>
</dbReference>
<dbReference type="HPA" id="ENSG00000154727">
    <property type="expression patterns" value="Low tissue specificity"/>
</dbReference>
<dbReference type="MIM" id="600609">
    <property type="type" value="gene"/>
</dbReference>
<dbReference type="neXtProt" id="NX_Q06546"/>
<dbReference type="OpenTargets" id="ENSG00000154727"/>
<dbReference type="PharmGKB" id="PA28485"/>
<dbReference type="VEuPathDB" id="HostDB:ENSG00000154727"/>
<dbReference type="eggNOG" id="KOG3806">
    <property type="taxonomic scope" value="Eukaryota"/>
</dbReference>
<dbReference type="GeneTree" id="ENSGT00940000155799"/>
<dbReference type="HOGENOM" id="CLU_037064_0_0_1"/>
<dbReference type="InParanoid" id="Q06546"/>
<dbReference type="OMA" id="LVNERKW"/>
<dbReference type="OrthoDB" id="10067219at2759"/>
<dbReference type="PAN-GO" id="Q06546">
    <property type="GO annotations" value="4 GO annotations based on evolutionary models"/>
</dbReference>
<dbReference type="PhylomeDB" id="Q06546"/>
<dbReference type="TreeFam" id="TF350537"/>
<dbReference type="PathwayCommons" id="Q06546"/>
<dbReference type="Reactome" id="R-HSA-2151201">
    <property type="pathway name" value="Transcriptional activation of mitochondrial biogenesis"/>
</dbReference>
<dbReference type="SignaLink" id="Q06546"/>
<dbReference type="BioGRID-ORCS" id="2551">
    <property type="hits" value="546 hits in 1155 CRISPR screens"/>
</dbReference>
<dbReference type="ChiTaRS" id="GABPA">
    <property type="organism name" value="human"/>
</dbReference>
<dbReference type="GeneWiki" id="GABPA"/>
<dbReference type="GenomeRNAi" id="2551"/>
<dbReference type="Pharos" id="Q06546">
    <property type="development level" value="Tbio"/>
</dbReference>
<dbReference type="PRO" id="PR:Q06546"/>
<dbReference type="Proteomes" id="UP000005640">
    <property type="component" value="Chromosome 21"/>
</dbReference>
<dbReference type="RNAct" id="Q06546">
    <property type="molecule type" value="protein"/>
</dbReference>
<dbReference type="Bgee" id="ENSG00000154727">
    <property type="expression patterns" value="Expressed in calcaneal tendon and 188 other cell types or tissues"/>
</dbReference>
<dbReference type="ExpressionAtlas" id="Q06546">
    <property type="expression patterns" value="baseline and differential"/>
</dbReference>
<dbReference type="GO" id="GO:0000785">
    <property type="term" value="C:chromatin"/>
    <property type="evidence" value="ECO:0000314"/>
    <property type="project" value="BHF-UCL"/>
</dbReference>
<dbReference type="GO" id="GO:0005654">
    <property type="term" value="C:nucleoplasm"/>
    <property type="evidence" value="ECO:0000314"/>
    <property type="project" value="HPA"/>
</dbReference>
<dbReference type="GO" id="GO:0005634">
    <property type="term" value="C:nucleus"/>
    <property type="evidence" value="ECO:0000314"/>
    <property type="project" value="MGI"/>
</dbReference>
<dbReference type="GO" id="GO:0003682">
    <property type="term" value="F:chromatin binding"/>
    <property type="evidence" value="ECO:0007669"/>
    <property type="project" value="Ensembl"/>
</dbReference>
<dbReference type="GO" id="GO:0001228">
    <property type="term" value="F:DNA-binding transcription activator activity, RNA polymerase II-specific"/>
    <property type="evidence" value="ECO:0000314"/>
    <property type="project" value="NTNU_SB"/>
</dbReference>
<dbReference type="GO" id="GO:0003700">
    <property type="term" value="F:DNA-binding transcription factor activity"/>
    <property type="evidence" value="ECO:0000304"/>
    <property type="project" value="ProtInc"/>
</dbReference>
<dbReference type="GO" id="GO:0000981">
    <property type="term" value="F:DNA-binding transcription factor activity, RNA polymerase II-specific"/>
    <property type="evidence" value="ECO:0000247"/>
    <property type="project" value="NTNU_SB"/>
</dbReference>
<dbReference type="GO" id="GO:0000978">
    <property type="term" value="F:RNA polymerase II cis-regulatory region sequence-specific DNA binding"/>
    <property type="evidence" value="ECO:0000314"/>
    <property type="project" value="NTNU_SB"/>
</dbReference>
<dbReference type="GO" id="GO:1990837">
    <property type="term" value="F:sequence-specific double-stranded DNA binding"/>
    <property type="evidence" value="ECO:0000314"/>
    <property type="project" value="ARUK-UCL"/>
</dbReference>
<dbReference type="GO" id="GO:0000976">
    <property type="term" value="F:transcription cis-regulatory region binding"/>
    <property type="evidence" value="ECO:0000314"/>
    <property type="project" value="MGI"/>
</dbReference>
<dbReference type="GO" id="GO:0001825">
    <property type="term" value="P:blastocyst formation"/>
    <property type="evidence" value="ECO:0007669"/>
    <property type="project" value="Ensembl"/>
</dbReference>
<dbReference type="GO" id="GO:0030154">
    <property type="term" value="P:cell differentiation"/>
    <property type="evidence" value="ECO:0000318"/>
    <property type="project" value="GO_Central"/>
</dbReference>
<dbReference type="GO" id="GO:0045653">
    <property type="term" value="P:negative regulation of megakaryocyte differentiation"/>
    <property type="evidence" value="ECO:0007669"/>
    <property type="project" value="Ensembl"/>
</dbReference>
<dbReference type="GO" id="GO:0000122">
    <property type="term" value="P:negative regulation of transcription by RNA polymerase II"/>
    <property type="evidence" value="ECO:0007669"/>
    <property type="project" value="Ensembl"/>
</dbReference>
<dbReference type="GO" id="GO:0045944">
    <property type="term" value="P:positive regulation of transcription by RNA polymerase II"/>
    <property type="evidence" value="ECO:0000314"/>
    <property type="project" value="UniProtKB"/>
</dbReference>
<dbReference type="GO" id="GO:0006357">
    <property type="term" value="P:regulation of transcription by RNA polymerase II"/>
    <property type="evidence" value="ECO:0000318"/>
    <property type="project" value="GO_Central"/>
</dbReference>
<dbReference type="CDD" id="cd08534">
    <property type="entry name" value="SAM_PNT-GABP-alpha"/>
    <property type="match status" value="1"/>
</dbReference>
<dbReference type="CDD" id="cd17039">
    <property type="entry name" value="Ubl_ubiquitin_like"/>
    <property type="match status" value="1"/>
</dbReference>
<dbReference type="FunFam" id="3.10.20.90:FF:000110">
    <property type="entry name" value="GA-binding protein alpha chain isoform X1"/>
    <property type="match status" value="1"/>
</dbReference>
<dbReference type="FunFam" id="1.10.10.10:FF:000200">
    <property type="entry name" value="GA-binding protein alpha chain, putative"/>
    <property type="match status" value="1"/>
</dbReference>
<dbReference type="FunFam" id="1.10.150.50:FF:000039">
    <property type="entry name" value="GA-binding protein alpha chain, putative"/>
    <property type="match status" value="1"/>
</dbReference>
<dbReference type="Gene3D" id="3.10.20.90">
    <property type="entry name" value="Phosphatidylinositol 3-kinase Catalytic Subunit, Chain A, domain 1"/>
    <property type="match status" value="1"/>
</dbReference>
<dbReference type="Gene3D" id="1.10.150.50">
    <property type="entry name" value="Transcription Factor, Ets-1"/>
    <property type="match status" value="1"/>
</dbReference>
<dbReference type="Gene3D" id="1.10.10.10">
    <property type="entry name" value="Winged helix-like DNA-binding domain superfamily/Winged helix DNA-binding domain"/>
    <property type="match status" value="1"/>
</dbReference>
<dbReference type="InterPro" id="IPR000418">
    <property type="entry name" value="Ets_dom"/>
</dbReference>
<dbReference type="InterPro" id="IPR046328">
    <property type="entry name" value="ETS_fam"/>
</dbReference>
<dbReference type="InterPro" id="IPR024668">
    <property type="entry name" value="GABP_asu_N"/>
</dbReference>
<dbReference type="InterPro" id="IPR003118">
    <property type="entry name" value="Pointed_dom"/>
</dbReference>
<dbReference type="InterPro" id="IPR013761">
    <property type="entry name" value="SAM/pointed_sf"/>
</dbReference>
<dbReference type="InterPro" id="IPR016312">
    <property type="entry name" value="TF_GA-bd_asu"/>
</dbReference>
<dbReference type="InterPro" id="IPR029071">
    <property type="entry name" value="Ubiquitin-like_domsf"/>
</dbReference>
<dbReference type="InterPro" id="IPR036388">
    <property type="entry name" value="WH-like_DNA-bd_sf"/>
</dbReference>
<dbReference type="InterPro" id="IPR036390">
    <property type="entry name" value="WH_DNA-bd_sf"/>
</dbReference>
<dbReference type="PANTHER" id="PTHR11849">
    <property type="entry name" value="ETS"/>
    <property type="match status" value="1"/>
</dbReference>
<dbReference type="PANTHER" id="PTHR11849:SF195">
    <property type="entry name" value="GA-BINDING PROTEIN ALPHA CHAIN"/>
    <property type="match status" value="1"/>
</dbReference>
<dbReference type="Pfam" id="PF00178">
    <property type="entry name" value="Ets"/>
    <property type="match status" value="1"/>
</dbReference>
<dbReference type="Pfam" id="PF11620">
    <property type="entry name" value="GABP-alpha"/>
    <property type="match status" value="1"/>
</dbReference>
<dbReference type="Pfam" id="PF02198">
    <property type="entry name" value="SAM_PNT"/>
    <property type="match status" value="1"/>
</dbReference>
<dbReference type="PIRSF" id="PIRSF001703">
    <property type="entry name" value="GABP_alpha"/>
    <property type="match status" value="1"/>
</dbReference>
<dbReference type="PRINTS" id="PR00454">
    <property type="entry name" value="ETSDOMAIN"/>
</dbReference>
<dbReference type="SMART" id="SM00413">
    <property type="entry name" value="ETS"/>
    <property type="match status" value="1"/>
</dbReference>
<dbReference type="SMART" id="SM00251">
    <property type="entry name" value="SAM_PNT"/>
    <property type="match status" value="1"/>
</dbReference>
<dbReference type="SUPFAM" id="SSF47769">
    <property type="entry name" value="SAM/Pointed domain"/>
    <property type="match status" value="1"/>
</dbReference>
<dbReference type="SUPFAM" id="SSF54236">
    <property type="entry name" value="Ubiquitin-like"/>
    <property type="match status" value="1"/>
</dbReference>
<dbReference type="SUPFAM" id="SSF46785">
    <property type="entry name" value="Winged helix' DNA-binding domain"/>
    <property type="match status" value="1"/>
</dbReference>
<dbReference type="PROSITE" id="PS00345">
    <property type="entry name" value="ETS_DOMAIN_1"/>
    <property type="match status" value="1"/>
</dbReference>
<dbReference type="PROSITE" id="PS00346">
    <property type="entry name" value="ETS_DOMAIN_2"/>
    <property type="match status" value="1"/>
</dbReference>
<dbReference type="PROSITE" id="PS50061">
    <property type="entry name" value="ETS_DOMAIN_3"/>
    <property type="match status" value="1"/>
</dbReference>
<dbReference type="PROSITE" id="PS51433">
    <property type="entry name" value="PNT"/>
    <property type="match status" value="1"/>
</dbReference>
<keyword id="KW-0238">DNA-binding</keyword>
<keyword id="KW-0539">Nucleus</keyword>
<keyword id="KW-0597">Phosphoprotein</keyword>
<keyword id="KW-1267">Proteomics identification</keyword>
<keyword id="KW-1185">Reference proteome</keyword>
<keyword id="KW-0804">Transcription</keyword>
<keyword id="KW-0805">Transcription regulation</keyword>
<comment type="function">
    <text evidence="4">Transcription factor capable of interacting with purine rich repeats (GA repeats). Positively regulates transcription of transcriptional repressor RHIT/ZNF205 (PubMed:22306510).</text>
</comment>
<comment type="function">
    <text>(Microbial infection) Necessary for the expression of the Adenovirus E4 gene.</text>
</comment>
<comment type="subunit">
    <text>Heterotetramer of two alpha and two beta subunits.</text>
</comment>
<comment type="interaction">
    <interactant intactId="EBI-638925">
        <id>Q06546</id>
    </interactant>
    <interactant intactId="EBI-701903">
        <id>Q14192</id>
        <label>FHL2</label>
    </interactant>
    <organismsDiffer>false</organismsDiffer>
    <experiments>2</experiments>
</comment>
<comment type="interaction">
    <interactant intactId="EBI-638925">
        <id>Q06546</id>
    </interactant>
    <interactant intactId="EBI-618165">
        <id>Q06547</id>
        <label>GABPB1</label>
    </interactant>
    <organismsDiffer>false</organismsDiffer>
    <experiments>6</experiments>
</comment>
<comment type="interaction">
    <interactant intactId="EBI-638925">
        <id>Q06546</id>
    </interactant>
    <interactant intactId="EBI-8468945">
        <id>Q8TAK5</id>
        <label>GABPB2</label>
    </interactant>
    <organismsDiffer>false</organismsDiffer>
    <experiments>7</experiments>
</comment>
<comment type="interaction">
    <interactant intactId="EBI-638925">
        <id>Q06546</id>
    </interactant>
    <interactant intactId="EBI-396176">
        <id>P51610</id>
        <label>HCFC1</label>
    </interactant>
    <organismsDiffer>false</organismsDiffer>
    <experiments>2</experiments>
</comment>
<comment type="interaction">
    <interactant intactId="EBI-638925">
        <id>Q06546</id>
    </interactant>
    <interactant intactId="EBI-749295">
        <id>O75716</id>
        <label>STK16</label>
    </interactant>
    <organismsDiffer>false</organismsDiffer>
    <experiments>3</experiments>
</comment>
<comment type="interaction">
    <interactant intactId="EBI-638925">
        <id>Q06546</id>
    </interactant>
    <interactant intactId="EBI-12275374">
        <id>Q5TFG8</id>
        <label>ZC2HC1B</label>
    </interactant>
    <organismsDiffer>false</organismsDiffer>
    <experiments>3</experiments>
</comment>
<comment type="subcellular location">
    <subcellularLocation>
        <location>Nucleus</location>
    </subcellularLocation>
</comment>
<comment type="developmental stage">
    <text evidence="4">In spleen mRNA levels are higher in adult than in fetal tissue.</text>
</comment>
<comment type="similarity">
    <text evidence="5">Belongs to the ETS family.</text>
</comment>
<evidence type="ECO:0000255" key="1">
    <source>
        <dbReference type="PROSITE-ProRule" id="PRU00237"/>
    </source>
</evidence>
<evidence type="ECO:0000255" key="2">
    <source>
        <dbReference type="PROSITE-ProRule" id="PRU00762"/>
    </source>
</evidence>
<evidence type="ECO:0000256" key="3">
    <source>
        <dbReference type="SAM" id="MobiDB-lite"/>
    </source>
</evidence>
<evidence type="ECO:0000269" key="4">
    <source>
    </source>
</evidence>
<evidence type="ECO:0000305" key="5"/>
<evidence type="ECO:0007744" key="6">
    <source>
    </source>
</evidence>
<gene>
    <name type="primary">GABPA</name>
    <name type="synonym">E4TF1A</name>
</gene>
<accession>Q06546</accession>
<accession>Q12939</accession>
<sequence length="454" mass="51295">MTKREAEELIEIEIDGTEKAECTEESIVEQTYAPAECVSQAIDINEPIGNLKKLLEPRLQCSLDAHEICLQDIQLDPERSLFDQGVKTDGTVQLSVQVISYQGIEPKLNILEIVKPADTVEVVIDPDAHHAESEAHLVEEAQVITLDGTKHITTISDETSEQVTRWAAALEGYRKEQERLGIPYDPIQWSTDQVLHWVVWVMKEFSMTDIDLTTLNISGRELCSLNQEDFFQRVPRGEILWSHLELLRKYVLASQEQQMNEIVTIDQPVQIIPASVQSATPTTIKVINSSAKAAKVQRAPRISGEDRSSPGNRTGNNGQIQLWQFLLELLTDKDARDCISWVGDEGEFKLNQPELVAQKWGQRKNKPTMNYEKLSRALRYYYDGDMICKVQGKRFVYKFVCDLKTLIGYSAAELNRLVTECEQKKLAKMQLHGIAQPVTAVALATASLQTEKDN</sequence>
<feature type="chain" id="PRO_0000204127" description="GA-binding protein alpha chain">
    <location>
        <begin position="1"/>
        <end position="454"/>
    </location>
</feature>
<feature type="domain" description="PNT" evidence="2">
    <location>
        <begin position="168"/>
        <end position="251"/>
    </location>
</feature>
<feature type="DNA-binding region" description="ETS" evidence="1">
    <location>
        <begin position="320"/>
        <end position="400"/>
    </location>
</feature>
<feature type="region of interest" description="Disordered" evidence="3">
    <location>
        <begin position="297"/>
        <end position="316"/>
    </location>
</feature>
<feature type="modified residue" description="Phosphoserine" evidence="6">
    <location>
        <position position="303"/>
    </location>
</feature>
<feature type="sequence variant" id="VAR_020315" description="In dbSNP:rs2829897.">
    <original>A</original>
    <variation>V</variation>
    <location>
        <position position="291"/>
    </location>
</feature>
<feature type="sequence variant" id="VAR_020316" description="In dbSNP:rs2829900.">
    <original>E</original>
    <variation>K</variation>
    <location>
        <position position="345"/>
    </location>
</feature>
<feature type="sequence conflict" description="In Ref. 2; AAA65706." evidence="5" ref="2">
    <original>SS</original>
    <variation>RC</variation>
    <location>
        <begin position="289"/>
        <end position="290"/>
    </location>
</feature>
<feature type="sequence conflict" description="In Ref. 2; AAA65706." evidence="5" ref="2">
    <original>A</original>
    <variation>V</variation>
    <location>
        <position position="440"/>
    </location>
</feature>
<reference key="1">
    <citation type="journal article" date="1993" name="Mol. Cell. Biol.">
        <title>cDNA cloning of transcription factor E4TF1 subunits with Ets and notch motifs.</title>
        <authorList>
            <person name="Watanabe H."/>
            <person name="Sawada J."/>
            <person name="Yano K."/>
            <person name="Yamaguchi K."/>
            <person name="Goto M."/>
            <person name="Handa H."/>
        </authorList>
    </citation>
    <scope>NUCLEOTIDE SEQUENCE [MRNA]</scope>
</reference>
<reference key="2">
    <citation type="journal article" date="1995" name="Mol. Cell. Biol.">
        <title>Four structurally distinct, non-DNA-binding subunits of human nuclear respiratory factor 2 share a conserved transcriptional activation domain.</title>
        <authorList>
            <person name="Gugneja S."/>
            <person name="Virbasius J.V."/>
            <person name="Scarpulla R.C."/>
        </authorList>
    </citation>
    <scope>NUCLEOTIDE SEQUENCE [MRNA]</scope>
</reference>
<reference key="3">
    <citation type="journal article" date="2011" name="BMC Syst. Biol.">
        <title>Initial characterization of the human central proteome.</title>
        <authorList>
            <person name="Burkard T.R."/>
            <person name="Planyavsky M."/>
            <person name="Kaupe I."/>
            <person name="Breitwieser F.P."/>
            <person name="Buerckstuemmer T."/>
            <person name="Bennett K.L."/>
            <person name="Superti-Furga G."/>
            <person name="Colinge J."/>
        </authorList>
    </citation>
    <scope>IDENTIFICATION BY MASS SPECTROMETRY [LARGE SCALE ANALYSIS]</scope>
</reference>
<reference key="4">
    <citation type="journal article" date="2013" name="J. Proteome Res.">
        <title>Toward a comprehensive characterization of a human cancer cell phosphoproteome.</title>
        <authorList>
            <person name="Zhou H."/>
            <person name="Di Palma S."/>
            <person name="Preisinger C."/>
            <person name="Peng M."/>
            <person name="Polat A.N."/>
            <person name="Heck A.J."/>
            <person name="Mohammed S."/>
        </authorList>
    </citation>
    <scope>PHOSPHORYLATION [LARGE SCALE ANALYSIS] AT SER-303</scope>
    <scope>IDENTIFICATION BY MASS SPECTROMETRY [LARGE SCALE ANALYSIS]</scope>
    <source>
        <tissue>Cervix carcinoma</tissue>
    </source>
</reference>
<reference key="5">
    <citation type="journal article" date="2012" name="Free Radic. Biol. Med.">
        <title>Identification of Rhit as a novel transcriptional repressor of human Mpv17-like protein with a mitigating effect on mitochondrial dysfunction, and its transcriptional regulation by FOXD3 and GABP.</title>
        <authorList>
            <person name="Iida R."/>
            <person name="Ueki M."/>
            <person name="Yasuda T."/>
        </authorList>
    </citation>
    <scope>FUNCTION</scope>
    <scope>DEVELOPMENTAL STAGE</scope>
</reference>
<organism>
    <name type="scientific">Homo sapiens</name>
    <name type="common">Human</name>
    <dbReference type="NCBI Taxonomy" id="9606"/>
    <lineage>
        <taxon>Eukaryota</taxon>
        <taxon>Metazoa</taxon>
        <taxon>Chordata</taxon>
        <taxon>Craniata</taxon>
        <taxon>Vertebrata</taxon>
        <taxon>Euteleostomi</taxon>
        <taxon>Mammalia</taxon>
        <taxon>Eutheria</taxon>
        <taxon>Euarchontoglires</taxon>
        <taxon>Primates</taxon>
        <taxon>Haplorrhini</taxon>
        <taxon>Catarrhini</taxon>
        <taxon>Hominidae</taxon>
        <taxon>Homo</taxon>
    </lineage>
</organism>
<protein>
    <recommendedName>
        <fullName>GA-binding protein alpha chain</fullName>
        <shortName>GABP subunit alpha</shortName>
    </recommendedName>
    <alternativeName>
        <fullName>Nuclear respiratory factor 2 subunit alpha</fullName>
    </alternativeName>
    <alternativeName>
        <fullName>Transcription factor E4TF1-60</fullName>
    </alternativeName>
</protein>